<feature type="chain" id="PRO_0000177574" description="Translation initiation factor IF-3">
    <location>
        <begin position="1"/>
        <end position="206"/>
    </location>
</feature>
<keyword id="KW-0963">Cytoplasm</keyword>
<keyword id="KW-0396">Initiation factor</keyword>
<keyword id="KW-0648">Protein biosynthesis</keyword>
<keyword id="KW-1185">Reference proteome</keyword>
<name>IF3_SHIFL</name>
<proteinExistence type="inferred from homology"/>
<gene>
    <name evidence="1" type="primary">infC</name>
    <name type="ordered locus">SF1513</name>
    <name type="ordered locus">S1631</name>
</gene>
<accession>Q83L38</accession>
<reference key="1">
    <citation type="journal article" date="2002" name="Nucleic Acids Res.">
        <title>Genome sequence of Shigella flexneri 2a: insights into pathogenicity through comparison with genomes of Escherichia coli K12 and O157.</title>
        <authorList>
            <person name="Jin Q."/>
            <person name="Yuan Z."/>
            <person name="Xu J."/>
            <person name="Wang Y."/>
            <person name="Shen Y."/>
            <person name="Lu W."/>
            <person name="Wang J."/>
            <person name="Liu H."/>
            <person name="Yang J."/>
            <person name="Yang F."/>
            <person name="Zhang X."/>
            <person name="Zhang J."/>
            <person name="Yang G."/>
            <person name="Wu H."/>
            <person name="Qu D."/>
            <person name="Dong J."/>
            <person name="Sun L."/>
            <person name="Xue Y."/>
            <person name="Zhao A."/>
            <person name="Gao Y."/>
            <person name="Zhu J."/>
            <person name="Kan B."/>
            <person name="Ding K."/>
            <person name="Chen S."/>
            <person name="Cheng H."/>
            <person name="Yao Z."/>
            <person name="He B."/>
            <person name="Chen R."/>
            <person name="Ma D."/>
            <person name="Qiang B."/>
            <person name="Wen Y."/>
            <person name="Hou Y."/>
            <person name="Yu J."/>
        </authorList>
    </citation>
    <scope>NUCLEOTIDE SEQUENCE [LARGE SCALE GENOMIC DNA]</scope>
    <source>
        <strain>301 / Serotype 2a</strain>
    </source>
</reference>
<reference key="2">
    <citation type="journal article" date="2003" name="Infect. Immun.">
        <title>Complete genome sequence and comparative genomics of Shigella flexneri serotype 2a strain 2457T.</title>
        <authorList>
            <person name="Wei J."/>
            <person name="Goldberg M.B."/>
            <person name="Burland V."/>
            <person name="Venkatesan M.M."/>
            <person name="Deng W."/>
            <person name="Fournier G."/>
            <person name="Mayhew G.F."/>
            <person name="Plunkett G. III"/>
            <person name="Rose D.J."/>
            <person name="Darling A."/>
            <person name="Mau B."/>
            <person name="Perna N.T."/>
            <person name="Payne S.M."/>
            <person name="Runyen-Janecky L.J."/>
            <person name="Zhou S."/>
            <person name="Schwartz D.C."/>
            <person name="Blattner F.R."/>
        </authorList>
    </citation>
    <scope>NUCLEOTIDE SEQUENCE [LARGE SCALE GENOMIC DNA]</scope>
    <source>
        <strain>ATCC 700930 / 2457T / Serotype 2a</strain>
    </source>
</reference>
<dbReference type="EMBL" id="AE005674">
    <property type="protein sequence ID" value="AAN43103.1"/>
    <property type="status" value="ALT_INIT"/>
    <property type="molecule type" value="Genomic_DNA"/>
</dbReference>
<dbReference type="EMBL" id="AE014073">
    <property type="protein sequence ID" value="AAP16993.1"/>
    <property type="status" value="ALT_INIT"/>
    <property type="molecule type" value="Genomic_DNA"/>
</dbReference>
<dbReference type="RefSeq" id="NP_707396.1">
    <property type="nucleotide sequence ID" value="NC_004337.2"/>
</dbReference>
<dbReference type="SMR" id="Q83L38"/>
<dbReference type="STRING" id="198214.SF1513"/>
<dbReference type="GeneID" id="1026392"/>
<dbReference type="KEGG" id="sfl:SF1513"/>
<dbReference type="KEGG" id="sfx:S1631"/>
<dbReference type="PATRIC" id="fig|198214.7.peg.1789"/>
<dbReference type="HOGENOM" id="CLU_054919_3_2_6"/>
<dbReference type="Proteomes" id="UP000001006">
    <property type="component" value="Chromosome"/>
</dbReference>
<dbReference type="Proteomes" id="UP000002673">
    <property type="component" value="Chromosome"/>
</dbReference>
<dbReference type="GO" id="GO:0005829">
    <property type="term" value="C:cytosol"/>
    <property type="evidence" value="ECO:0007669"/>
    <property type="project" value="TreeGrafter"/>
</dbReference>
<dbReference type="GO" id="GO:0016020">
    <property type="term" value="C:membrane"/>
    <property type="evidence" value="ECO:0007669"/>
    <property type="project" value="TreeGrafter"/>
</dbReference>
<dbReference type="GO" id="GO:0043022">
    <property type="term" value="F:ribosome binding"/>
    <property type="evidence" value="ECO:0007669"/>
    <property type="project" value="TreeGrafter"/>
</dbReference>
<dbReference type="GO" id="GO:0003743">
    <property type="term" value="F:translation initiation factor activity"/>
    <property type="evidence" value="ECO:0007669"/>
    <property type="project" value="UniProtKB-UniRule"/>
</dbReference>
<dbReference type="GO" id="GO:0032790">
    <property type="term" value="P:ribosome disassembly"/>
    <property type="evidence" value="ECO:0007669"/>
    <property type="project" value="TreeGrafter"/>
</dbReference>
<dbReference type="FunFam" id="3.30.110.10:FF:000001">
    <property type="entry name" value="Translation initiation factor IF-3"/>
    <property type="match status" value="1"/>
</dbReference>
<dbReference type="Gene3D" id="3.30.110.10">
    <property type="entry name" value="Translation initiation factor 3 (IF-3), C-terminal domain"/>
    <property type="match status" value="1"/>
</dbReference>
<dbReference type="Gene3D" id="3.10.20.80">
    <property type="entry name" value="Translation initiation factor 3 (IF-3), N-terminal domain"/>
    <property type="match status" value="2"/>
</dbReference>
<dbReference type="HAMAP" id="MF_00080">
    <property type="entry name" value="IF_3"/>
    <property type="match status" value="1"/>
</dbReference>
<dbReference type="InterPro" id="IPR036788">
    <property type="entry name" value="T_IF-3_C_sf"/>
</dbReference>
<dbReference type="InterPro" id="IPR036787">
    <property type="entry name" value="T_IF-3_N_sf"/>
</dbReference>
<dbReference type="InterPro" id="IPR019813">
    <property type="entry name" value="Translation_initiation_fac3_CS"/>
</dbReference>
<dbReference type="InterPro" id="IPR001288">
    <property type="entry name" value="Translation_initiation_fac_3"/>
</dbReference>
<dbReference type="InterPro" id="IPR019815">
    <property type="entry name" value="Translation_initiation_fac_3_C"/>
</dbReference>
<dbReference type="InterPro" id="IPR019814">
    <property type="entry name" value="Translation_initiation_fac_3_N"/>
</dbReference>
<dbReference type="NCBIfam" id="TIGR00168">
    <property type="entry name" value="infC"/>
    <property type="match status" value="2"/>
</dbReference>
<dbReference type="PANTHER" id="PTHR10938">
    <property type="entry name" value="TRANSLATION INITIATION FACTOR IF-3"/>
    <property type="match status" value="1"/>
</dbReference>
<dbReference type="PANTHER" id="PTHR10938:SF0">
    <property type="entry name" value="TRANSLATION INITIATION FACTOR IF-3, MITOCHONDRIAL"/>
    <property type="match status" value="1"/>
</dbReference>
<dbReference type="Pfam" id="PF00707">
    <property type="entry name" value="IF3_C"/>
    <property type="match status" value="1"/>
</dbReference>
<dbReference type="Pfam" id="PF05198">
    <property type="entry name" value="IF3_N"/>
    <property type="match status" value="2"/>
</dbReference>
<dbReference type="SUPFAM" id="SSF55200">
    <property type="entry name" value="Translation initiation factor IF3, C-terminal domain"/>
    <property type="match status" value="1"/>
</dbReference>
<dbReference type="SUPFAM" id="SSF54364">
    <property type="entry name" value="Translation initiation factor IF3, N-terminal domain"/>
    <property type="match status" value="2"/>
</dbReference>
<dbReference type="PROSITE" id="PS00938">
    <property type="entry name" value="IF3"/>
    <property type="match status" value="1"/>
</dbReference>
<evidence type="ECO:0000255" key="1">
    <source>
        <dbReference type="HAMAP-Rule" id="MF_00080"/>
    </source>
</evidence>
<evidence type="ECO:0000305" key="2"/>
<sequence>MKGGKRVQTARPNRINGEIRAQEVRLTGLEGEQLGIVSLREALEKAEEAGVDLVEISPNAEPMSLREALEKAEEAGVDLVEISPNAEPPVCRIMDYGKFLYEKSKSSKEQKKKQKVIQVKEIKFRPSTDEGDYQVKLRSLIRFLEEGDKAKITLRFRGREMAHQQIGMEVLNRVKDDLQELAVVESFPTKIEGRQMIMVLAPKKKQ</sequence>
<comment type="function">
    <text evidence="1">IF-3 binds to the 30S ribosomal subunit and shifts the equilibrium between 70S ribosomes and their 50S and 30S subunits in favor of the free subunits, thus enhancing the availability of 30S subunits on which protein synthesis initiation begins.</text>
</comment>
<comment type="subunit">
    <text evidence="1">Monomer.</text>
</comment>
<comment type="subcellular location">
    <subcellularLocation>
        <location evidence="1">Cytoplasm</location>
    </subcellularLocation>
</comment>
<comment type="similarity">
    <text evidence="1">Belongs to the IF-3 family.</text>
</comment>
<comment type="sequence caution" evidence="2">
    <conflict type="erroneous initiation">
        <sequence resource="EMBL-CDS" id="AAN43103"/>
    </conflict>
</comment>
<comment type="sequence caution" evidence="2">
    <conflict type="erroneous initiation">
        <sequence resource="EMBL-CDS" id="AAP16993"/>
    </conflict>
</comment>
<protein>
    <recommendedName>
        <fullName evidence="1">Translation initiation factor IF-3</fullName>
    </recommendedName>
</protein>
<organism>
    <name type="scientific">Shigella flexneri</name>
    <dbReference type="NCBI Taxonomy" id="623"/>
    <lineage>
        <taxon>Bacteria</taxon>
        <taxon>Pseudomonadati</taxon>
        <taxon>Pseudomonadota</taxon>
        <taxon>Gammaproteobacteria</taxon>
        <taxon>Enterobacterales</taxon>
        <taxon>Enterobacteriaceae</taxon>
        <taxon>Shigella</taxon>
    </lineage>
</organism>